<gene>
    <name evidence="1" type="primary">hisB</name>
    <name type="ordered locus">Cphy_2784</name>
</gene>
<protein>
    <recommendedName>
        <fullName evidence="1">Imidazoleglycerol-phosphate dehydratase</fullName>
        <shortName evidence="1">IGPD</shortName>
        <ecNumber evidence="1">4.2.1.19</ecNumber>
    </recommendedName>
</protein>
<evidence type="ECO:0000255" key="1">
    <source>
        <dbReference type="HAMAP-Rule" id="MF_00076"/>
    </source>
</evidence>
<accession>A9KNX4</accession>
<organism>
    <name type="scientific">Lachnoclostridium phytofermentans (strain ATCC 700394 / DSM 18823 / ISDg)</name>
    <name type="common">Clostridium phytofermentans</name>
    <dbReference type="NCBI Taxonomy" id="357809"/>
    <lineage>
        <taxon>Bacteria</taxon>
        <taxon>Bacillati</taxon>
        <taxon>Bacillota</taxon>
        <taxon>Clostridia</taxon>
        <taxon>Lachnospirales</taxon>
        <taxon>Lachnospiraceae</taxon>
    </lineage>
</organism>
<feature type="chain" id="PRO_1000075243" description="Imidazoleglycerol-phosphate dehydratase">
    <location>
        <begin position="1"/>
        <end position="196"/>
    </location>
</feature>
<name>HIS7_LACP7</name>
<sequence length="196" mass="21807">MNRTAKISRKTKETDITLELNLDGTGIAEIETGIGFLDHMVQSFAKHGFFDLTIKVKGDLYVDSHHTVEDTGIVLGQAIKQALDEKIGIRRYGSFLLPMDETLVLCAIDLSGRPYLNYQAQLTCEKLGYMDTELVKEFFYAISYSAGMNLHIKQMDGNNNHHIVEAMFKAFAKALDEASGIDPRIQGVLSTKGTVE</sequence>
<keyword id="KW-0028">Amino-acid biosynthesis</keyword>
<keyword id="KW-0963">Cytoplasm</keyword>
<keyword id="KW-0368">Histidine biosynthesis</keyword>
<keyword id="KW-0456">Lyase</keyword>
<keyword id="KW-1185">Reference proteome</keyword>
<dbReference type="EC" id="4.2.1.19" evidence="1"/>
<dbReference type="EMBL" id="CP000885">
    <property type="protein sequence ID" value="ABX43144.1"/>
    <property type="molecule type" value="Genomic_DNA"/>
</dbReference>
<dbReference type="RefSeq" id="WP_012200795.1">
    <property type="nucleotide sequence ID" value="NC_010001.1"/>
</dbReference>
<dbReference type="SMR" id="A9KNX4"/>
<dbReference type="STRING" id="357809.Cphy_2784"/>
<dbReference type="KEGG" id="cpy:Cphy_2784"/>
<dbReference type="eggNOG" id="COG0131">
    <property type="taxonomic scope" value="Bacteria"/>
</dbReference>
<dbReference type="HOGENOM" id="CLU_044308_2_0_9"/>
<dbReference type="OrthoDB" id="9790411at2"/>
<dbReference type="UniPathway" id="UPA00031">
    <property type="reaction ID" value="UER00011"/>
</dbReference>
<dbReference type="Proteomes" id="UP000000370">
    <property type="component" value="Chromosome"/>
</dbReference>
<dbReference type="GO" id="GO:0005737">
    <property type="term" value="C:cytoplasm"/>
    <property type="evidence" value="ECO:0007669"/>
    <property type="project" value="UniProtKB-SubCell"/>
</dbReference>
<dbReference type="GO" id="GO:0004424">
    <property type="term" value="F:imidazoleglycerol-phosphate dehydratase activity"/>
    <property type="evidence" value="ECO:0007669"/>
    <property type="project" value="UniProtKB-UniRule"/>
</dbReference>
<dbReference type="GO" id="GO:0000105">
    <property type="term" value="P:L-histidine biosynthetic process"/>
    <property type="evidence" value="ECO:0007669"/>
    <property type="project" value="UniProtKB-UniRule"/>
</dbReference>
<dbReference type="CDD" id="cd07914">
    <property type="entry name" value="IGPD"/>
    <property type="match status" value="1"/>
</dbReference>
<dbReference type="FunFam" id="3.30.230.40:FF:000001">
    <property type="entry name" value="Imidazoleglycerol-phosphate dehydratase HisB"/>
    <property type="match status" value="1"/>
</dbReference>
<dbReference type="FunFam" id="3.30.230.40:FF:000003">
    <property type="entry name" value="Imidazoleglycerol-phosphate dehydratase HisB"/>
    <property type="match status" value="1"/>
</dbReference>
<dbReference type="Gene3D" id="3.30.230.40">
    <property type="entry name" value="Imidazole glycerol phosphate dehydratase, domain 1"/>
    <property type="match status" value="2"/>
</dbReference>
<dbReference type="HAMAP" id="MF_00076">
    <property type="entry name" value="HisB"/>
    <property type="match status" value="1"/>
</dbReference>
<dbReference type="InterPro" id="IPR038494">
    <property type="entry name" value="IGPD_sf"/>
</dbReference>
<dbReference type="InterPro" id="IPR000807">
    <property type="entry name" value="ImidazoleglycerolP_deHydtase"/>
</dbReference>
<dbReference type="InterPro" id="IPR020565">
    <property type="entry name" value="ImidazoleglycerP_deHydtase_CS"/>
</dbReference>
<dbReference type="InterPro" id="IPR020568">
    <property type="entry name" value="Ribosomal_Su5_D2-typ_SF"/>
</dbReference>
<dbReference type="NCBIfam" id="NF002109">
    <property type="entry name" value="PRK00951.1-5"/>
    <property type="match status" value="1"/>
</dbReference>
<dbReference type="NCBIfam" id="NF002111">
    <property type="entry name" value="PRK00951.2-1"/>
    <property type="match status" value="1"/>
</dbReference>
<dbReference type="NCBIfam" id="NF002114">
    <property type="entry name" value="PRK00951.2-4"/>
    <property type="match status" value="1"/>
</dbReference>
<dbReference type="PANTHER" id="PTHR23133:SF2">
    <property type="entry name" value="IMIDAZOLEGLYCEROL-PHOSPHATE DEHYDRATASE"/>
    <property type="match status" value="1"/>
</dbReference>
<dbReference type="PANTHER" id="PTHR23133">
    <property type="entry name" value="IMIDAZOLEGLYCEROL-PHOSPHATE DEHYDRATASE HIS7"/>
    <property type="match status" value="1"/>
</dbReference>
<dbReference type="Pfam" id="PF00475">
    <property type="entry name" value="IGPD"/>
    <property type="match status" value="1"/>
</dbReference>
<dbReference type="SUPFAM" id="SSF54211">
    <property type="entry name" value="Ribosomal protein S5 domain 2-like"/>
    <property type="match status" value="2"/>
</dbReference>
<dbReference type="PROSITE" id="PS00954">
    <property type="entry name" value="IGP_DEHYDRATASE_1"/>
    <property type="match status" value="1"/>
</dbReference>
<dbReference type="PROSITE" id="PS00955">
    <property type="entry name" value="IGP_DEHYDRATASE_2"/>
    <property type="match status" value="1"/>
</dbReference>
<comment type="catalytic activity">
    <reaction evidence="1">
        <text>D-erythro-1-(imidazol-4-yl)glycerol 3-phosphate = 3-(imidazol-4-yl)-2-oxopropyl phosphate + H2O</text>
        <dbReference type="Rhea" id="RHEA:11040"/>
        <dbReference type="ChEBI" id="CHEBI:15377"/>
        <dbReference type="ChEBI" id="CHEBI:57766"/>
        <dbReference type="ChEBI" id="CHEBI:58278"/>
        <dbReference type="EC" id="4.2.1.19"/>
    </reaction>
</comment>
<comment type="pathway">
    <text evidence="1">Amino-acid biosynthesis; L-histidine biosynthesis; L-histidine from 5-phospho-alpha-D-ribose 1-diphosphate: step 6/9.</text>
</comment>
<comment type="subcellular location">
    <subcellularLocation>
        <location evidence="1">Cytoplasm</location>
    </subcellularLocation>
</comment>
<comment type="similarity">
    <text evidence="1">Belongs to the imidazoleglycerol-phosphate dehydratase family.</text>
</comment>
<reference key="1">
    <citation type="submission" date="2007-11" db="EMBL/GenBank/DDBJ databases">
        <title>Complete genome sequence of Clostridium phytofermentans ISDg.</title>
        <authorList>
            <person name="Leschine S.B."/>
            <person name="Warnick T.A."/>
            <person name="Blanchard J.L."/>
            <person name="Schnell D.J."/>
            <person name="Petit E.L."/>
            <person name="LaTouf W.G."/>
            <person name="Copeland A."/>
            <person name="Lucas S."/>
            <person name="Lapidus A."/>
            <person name="Barry K."/>
            <person name="Glavina del Rio T."/>
            <person name="Dalin E."/>
            <person name="Tice H."/>
            <person name="Pitluck S."/>
            <person name="Kiss H."/>
            <person name="Brettin T."/>
            <person name="Bruce D."/>
            <person name="Detter J.C."/>
            <person name="Han C."/>
            <person name="Kuske C."/>
            <person name="Schmutz J."/>
            <person name="Larimer F."/>
            <person name="Land M."/>
            <person name="Hauser L."/>
            <person name="Kyrpides N."/>
            <person name="Kim E.A."/>
            <person name="Richardson P."/>
        </authorList>
    </citation>
    <scope>NUCLEOTIDE SEQUENCE [LARGE SCALE GENOMIC DNA]</scope>
    <source>
        <strain>ATCC 700394 / DSM 18823 / ISDg</strain>
    </source>
</reference>
<proteinExistence type="inferred from homology"/>